<sequence length="426" mass="45370">MSKSENLYSAARELIPGGVNSPVRAFTGVGGTPLFIEKADGAYLYDVDGKAYIDYVGSWGPMVLGHNHPAIRNAVIEAAERGLSFGAPTEMEVKMAQLVTELVPTMDMVRMVNSGTEATMSAIRLARGFTGRDKIIKFEGCYHGHADCLLVKAGSGALTLGQPNSPGVPADFAKHTLTCTYNDLASVRAAFEQYPQEIACIIVEPVAGNMNCVPPLPEFLPGLRALCDEFGALLIIDEVMTGFRVALAGAQDYYGVEPDLTCLGKIIGGGMPVGAFGGRRDVMDALAPTGPVYQAGTLSGNPIAMAAGFACLNEVAQPGVHETLDELTTRLAEGLLEAAEEAGIPLVVNHVGGMFGIFFTDAESVTCYQDVMACDVERFKRFFHMMLDEGVYLAPSAFEAGFMSVAHSMEDINNTIDAARRVFAKL</sequence>
<accession>B6HZD0</accession>
<feature type="chain" id="PRO_1000121885" description="Glutamate-1-semialdehyde 2,1-aminomutase">
    <location>
        <begin position="1"/>
        <end position="426"/>
    </location>
</feature>
<feature type="modified residue" description="N6-(pyridoxal phosphate)lysine" evidence="1">
    <location>
        <position position="265"/>
    </location>
</feature>
<comment type="catalytic activity">
    <reaction evidence="1">
        <text>(S)-4-amino-5-oxopentanoate = 5-aminolevulinate</text>
        <dbReference type="Rhea" id="RHEA:14265"/>
        <dbReference type="ChEBI" id="CHEBI:57501"/>
        <dbReference type="ChEBI" id="CHEBI:356416"/>
        <dbReference type="EC" id="5.4.3.8"/>
    </reaction>
</comment>
<comment type="cofactor">
    <cofactor evidence="1">
        <name>pyridoxal 5'-phosphate</name>
        <dbReference type="ChEBI" id="CHEBI:597326"/>
    </cofactor>
</comment>
<comment type="pathway">
    <text evidence="1">Porphyrin-containing compound metabolism; protoporphyrin-IX biosynthesis; 5-aminolevulinate from L-glutamyl-tRNA(Glu): step 2/2.</text>
</comment>
<comment type="subunit">
    <text evidence="1">Homodimer.</text>
</comment>
<comment type="subcellular location">
    <subcellularLocation>
        <location evidence="1">Cytoplasm</location>
    </subcellularLocation>
</comment>
<comment type="similarity">
    <text evidence="1">Belongs to the class-III pyridoxal-phosphate-dependent aminotransferase family. HemL subfamily.</text>
</comment>
<organism>
    <name type="scientific">Escherichia coli (strain SE11)</name>
    <dbReference type="NCBI Taxonomy" id="409438"/>
    <lineage>
        <taxon>Bacteria</taxon>
        <taxon>Pseudomonadati</taxon>
        <taxon>Pseudomonadota</taxon>
        <taxon>Gammaproteobacteria</taxon>
        <taxon>Enterobacterales</taxon>
        <taxon>Enterobacteriaceae</taxon>
        <taxon>Escherichia</taxon>
    </lineage>
</organism>
<dbReference type="EC" id="5.4.3.8" evidence="1"/>
<dbReference type="EMBL" id="AP009240">
    <property type="protein sequence ID" value="BAG75679.1"/>
    <property type="molecule type" value="Genomic_DNA"/>
</dbReference>
<dbReference type="RefSeq" id="WP_000045291.1">
    <property type="nucleotide sequence ID" value="NC_011415.1"/>
</dbReference>
<dbReference type="SMR" id="B6HZD0"/>
<dbReference type="KEGG" id="ecy:ECSE_0155"/>
<dbReference type="HOGENOM" id="CLU_016922_1_5_6"/>
<dbReference type="UniPathway" id="UPA00251">
    <property type="reaction ID" value="UER00317"/>
</dbReference>
<dbReference type="Proteomes" id="UP000008199">
    <property type="component" value="Chromosome"/>
</dbReference>
<dbReference type="GO" id="GO:0005737">
    <property type="term" value="C:cytoplasm"/>
    <property type="evidence" value="ECO:0007669"/>
    <property type="project" value="UniProtKB-SubCell"/>
</dbReference>
<dbReference type="GO" id="GO:0042286">
    <property type="term" value="F:glutamate-1-semialdehyde 2,1-aminomutase activity"/>
    <property type="evidence" value="ECO:0007669"/>
    <property type="project" value="UniProtKB-UniRule"/>
</dbReference>
<dbReference type="GO" id="GO:0030170">
    <property type="term" value="F:pyridoxal phosphate binding"/>
    <property type="evidence" value="ECO:0007669"/>
    <property type="project" value="InterPro"/>
</dbReference>
<dbReference type="GO" id="GO:0008483">
    <property type="term" value="F:transaminase activity"/>
    <property type="evidence" value="ECO:0007669"/>
    <property type="project" value="InterPro"/>
</dbReference>
<dbReference type="GO" id="GO:0006782">
    <property type="term" value="P:protoporphyrinogen IX biosynthetic process"/>
    <property type="evidence" value="ECO:0007669"/>
    <property type="project" value="UniProtKB-UniRule"/>
</dbReference>
<dbReference type="CDD" id="cd00610">
    <property type="entry name" value="OAT_like"/>
    <property type="match status" value="1"/>
</dbReference>
<dbReference type="FunFam" id="3.40.640.10:FF:000021">
    <property type="entry name" value="Glutamate-1-semialdehyde 2,1-aminomutase"/>
    <property type="match status" value="1"/>
</dbReference>
<dbReference type="FunFam" id="3.90.1150.10:FF:000012">
    <property type="entry name" value="Glutamate-1-semialdehyde 2,1-aminomutase"/>
    <property type="match status" value="1"/>
</dbReference>
<dbReference type="Gene3D" id="3.90.1150.10">
    <property type="entry name" value="Aspartate Aminotransferase, domain 1"/>
    <property type="match status" value="1"/>
</dbReference>
<dbReference type="Gene3D" id="3.40.640.10">
    <property type="entry name" value="Type I PLP-dependent aspartate aminotransferase-like (Major domain)"/>
    <property type="match status" value="1"/>
</dbReference>
<dbReference type="HAMAP" id="MF_00375">
    <property type="entry name" value="HemL_aminotrans_3"/>
    <property type="match status" value="1"/>
</dbReference>
<dbReference type="InterPro" id="IPR004639">
    <property type="entry name" value="4pyrrol_synth_GluAld_NH2Trfase"/>
</dbReference>
<dbReference type="InterPro" id="IPR005814">
    <property type="entry name" value="Aminotrans_3"/>
</dbReference>
<dbReference type="InterPro" id="IPR049704">
    <property type="entry name" value="Aminotrans_3_PPA_site"/>
</dbReference>
<dbReference type="InterPro" id="IPR015424">
    <property type="entry name" value="PyrdxlP-dep_Trfase"/>
</dbReference>
<dbReference type="InterPro" id="IPR015421">
    <property type="entry name" value="PyrdxlP-dep_Trfase_major"/>
</dbReference>
<dbReference type="InterPro" id="IPR015422">
    <property type="entry name" value="PyrdxlP-dep_Trfase_small"/>
</dbReference>
<dbReference type="NCBIfam" id="TIGR00713">
    <property type="entry name" value="hemL"/>
    <property type="match status" value="1"/>
</dbReference>
<dbReference type="NCBIfam" id="NF000818">
    <property type="entry name" value="PRK00062.1"/>
    <property type="match status" value="1"/>
</dbReference>
<dbReference type="PANTHER" id="PTHR43713">
    <property type="entry name" value="GLUTAMATE-1-SEMIALDEHYDE 2,1-AMINOMUTASE"/>
    <property type="match status" value="1"/>
</dbReference>
<dbReference type="PANTHER" id="PTHR43713:SF3">
    <property type="entry name" value="GLUTAMATE-1-SEMIALDEHYDE 2,1-AMINOMUTASE 1, CHLOROPLASTIC-RELATED"/>
    <property type="match status" value="1"/>
</dbReference>
<dbReference type="Pfam" id="PF00202">
    <property type="entry name" value="Aminotran_3"/>
    <property type="match status" value="1"/>
</dbReference>
<dbReference type="SUPFAM" id="SSF53383">
    <property type="entry name" value="PLP-dependent transferases"/>
    <property type="match status" value="1"/>
</dbReference>
<dbReference type="PROSITE" id="PS00600">
    <property type="entry name" value="AA_TRANSFER_CLASS_3"/>
    <property type="match status" value="1"/>
</dbReference>
<protein>
    <recommendedName>
        <fullName evidence="1">Glutamate-1-semialdehyde 2,1-aminomutase</fullName>
        <shortName evidence="1">GSA</shortName>
        <ecNumber evidence="1">5.4.3.8</ecNumber>
    </recommendedName>
    <alternativeName>
        <fullName evidence="1">Glutamate-1-semialdehyde aminotransferase</fullName>
        <shortName evidence="1">GSA-AT</shortName>
    </alternativeName>
</protein>
<evidence type="ECO:0000255" key="1">
    <source>
        <dbReference type="HAMAP-Rule" id="MF_00375"/>
    </source>
</evidence>
<name>GSA_ECOSE</name>
<reference key="1">
    <citation type="journal article" date="2008" name="DNA Res.">
        <title>Complete genome sequence and comparative analysis of the wild-type commensal Escherichia coli strain SE11 isolated from a healthy adult.</title>
        <authorList>
            <person name="Oshima K."/>
            <person name="Toh H."/>
            <person name="Ogura Y."/>
            <person name="Sasamoto H."/>
            <person name="Morita H."/>
            <person name="Park S.-H."/>
            <person name="Ooka T."/>
            <person name="Iyoda S."/>
            <person name="Taylor T.D."/>
            <person name="Hayashi T."/>
            <person name="Itoh K."/>
            <person name="Hattori M."/>
        </authorList>
    </citation>
    <scope>NUCLEOTIDE SEQUENCE [LARGE SCALE GENOMIC DNA]</scope>
    <source>
        <strain>SE11</strain>
    </source>
</reference>
<gene>
    <name evidence="1" type="primary">hemL</name>
    <name type="ordered locus">ECSE_0155</name>
</gene>
<proteinExistence type="inferred from homology"/>
<keyword id="KW-0963">Cytoplasm</keyword>
<keyword id="KW-0413">Isomerase</keyword>
<keyword id="KW-0627">Porphyrin biosynthesis</keyword>
<keyword id="KW-0663">Pyridoxal phosphate</keyword>